<dbReference type="EMBL" id="AY376879">
    <property type="protein sequence ID" value="AAQ92365.1"/>
    <property type="molecule type" value="mRNA"/>
</dbReference>
<dbReference type="EMBL" id="AK133244">
    <property type="protein sequence ID" value="BAE21576.1"/>
    <property type="molecule type" value="mRNA"/>
</dbReference>
<dbReference type="EMBL" id="AK164998">
    <property type="protein sequence ID" value="BAE37997.1"/>
    <property type="molecule type" value="mRNA"/>
</dbReference>
<dbReference type="EMBL" id="AL928710">
    <property type="status" value="NOT_ANNOTATED_CDS"/>
    <property type="molecule type" value="Genomic_DNA"/>
</dbReference>
<dbReference type="EMBL" id="BC028795">
    <property type="protein sequence ID" value="AAH28795.1"/>
    <property type="molecule type" value="mRNA"/>
</dbReference>
<dbReference type="EMBL" id="BC094346">
    <property type="protein sequence ID" value="AAH94346.1"/>
    <property type="molecule type" value="mRNA"/>
</dbReference>
<dbReference type="EMBL" id="BC117018">
    <property type="protein sequence ID" value="AAI17019.1"/>
    <property type="molecule type" value="mRNA"/>
</dbReference>
<dbReference type="EMBL" id="BC119037">
    <property type="protein sequence ID" value="AAI19038.1"/>
    <property type="molecule type" value="mRNA"/>
</dbReference>
<dbReference type="CCDS" id="CCDS15920.1">
    <molecule id="Q6U7H8-1"/>
</dbReference>
<dbReference type="RefSeq" id="NP_937834.1">
    <molecule id="Q6U7H8-1"/>
    <property type="nucleotide sequence ID" value="NM_198191.3"/>
</dbReference>
<dbReference type="SMR" id="Q6U7H8"/>
<dbReference type="BioGRID" id="230677">
    <property type="interactions" value="1"/>
</dbReference>
<dbReference type="FunCoup" id="Q6U7H8">
    <property type="interactions" value="441"/>
</dbReference>
<dbReference type="IntAct" id="Q6U7H8">
    <property type="interactions" value="1"/>
</dbReference>
<dbReference type="STRING" id="10090.ENSMUSP00000051282"/>
<dbReference type="GlyGen" id="Q6U7H8">
    <property type="glycosylation" value="1 site"/>
</dbReference>
<dbReference type="PhosphoSitePlus" id="Q6U7H8"/>
<dbReference type="PaxDb" id="10090-ENSMUSP00000051282"/>
<dbReference type="ProteomicsDB" id="301824">
    <molecule id="Q6U7H8-1"/>
</dbReference>
<dbReference type="ProteomicsDB" id="301825">
    <molecule id="Q6U7H8-2"/>
</dbReference>
<dbReference type="ProteomicsDB" id="301826">
    <molecule id="Q6U7H8-3"/>
</dbReference>
<dbReference type="ProteomicsDB" id="301827">
    <molecule id="Q6U7H8-4"/>
</dbReference>
<dbReference type="Antibodypedia" id="30919">
    <property type="antibodies" value="138 antibodies from 26 providers"/>
</dbReference>
<dbReference type="DNASU" id="227733"/>
<dbReference type="Ensembl" id="ENSMUST00000055304.14">
    <molecule id="Q6U7H8-1"/>
    <property type="protein sequence ID" value="ENSMUSP00000051282.8"/>
    <property type="gene ID" value="ENSMUSG00000046854.17"/>
</dbReference>
<dbReference type="Ensembl" id="ENSMUST00000100188.3">
    <molecule id="Q6U7H8-3"/>
    <property type="protein sequence ID" value="ENSMUSP00000097763.3"/>
    <property type="gene ID" value="ENSMUSG00000046854.17"/>
</dbReference>
<dbReference type="GeneID" id="227733"/>
<dbReference type="KEGG" id="mmu:227733"/>
<dbReference type="UCSC" id="uc008jfv.1">
    <molecule id="Q6U7H8-1"/>
    <property type="organism name" value="mouse"/>
</dbReference>
<dbReference type="AGR" id="MGI:2448520"/>
<dbReference type="CTD" id="138429"/>
<dbReference type="MGI" id="MGI:2448520">
    <property type="gene designation" value="Pip5kl1"/>
</dbReference>
<dbReference type="VEuPathDB" id="HostDB:ENSMUSG00000046854"/>
<dbReference type="eggNOG" id="KOG0229">
    <property type="taxonomic scope" value="Eukaryota"/>
</dbReference>
<dbReference type="GeneTree" id="ENSGT00940000158633"/>
<dbReference type="HOGENOM" id="CLU_043959_0_0_1"/>
<dbReference type="InParanoid" id="Q6U7H8"/>
<dbReference type="OMA" id="AYDIKGC"/>
<dbReference type="PhylomeDB" id="Q6U7H8"/>
<dbReference type="TreeFam" id="TF354315"/>
<dbReference type="BioGRID-ORCS" id="227733">
    <property type="hits" value="2 hits in 79 CRISPR screens"/>
</dbReference>
<dbReference type="ChiTaRS" id="Pip5kl1">
    <property type="organism name" value="mouse"/>
</dbReference>
<dbReference type="PRO" id="PR:Q6U7H8"/>
<dbReference type="Proteomes" id="UP000000589">
    <property type="component" value="Chromosome 2"/>
</dbReference>
<dbReference type="RNAct" id="Q6U7H8">
    <property type="molecule type" value="protein"/>
</dbReference>
<dbReference type="Bgee" id="ENSMUSG00000046854">
    <property type="expression patterns" value="Expressed in lens of camera-type eye and 77 other cell types or tissues"/>
</dbReference>
<dbReference type="GO" id="GO:0042995">
    <property type="term" value="C:cell projection"/>
    <property type="evidence" value="ECO:0000314"/>
    <property type="project" value="MGI"/>
</dbReference>
<dbReference type="GO" id="GO:0005829">
    <property type="term" value="C:cytosol"/>
    <property type="evidence" value="ECO:0007669"/>
    <property type="project" value="Ensembl"/>
</dbReference>
<dbReference type="GO" id="GO:0016020">
    <property type="term" value="C:membrane"/>
    <property type="evidence" value="ECO:0007669"/>
    <property type="project" value="UniProtKB-SubCell"/>
</dbReference>
<dbReference type="GO" id="GO:0016308">
    <property type="term" value="F:1-phosphatidylinositol-4-phosphate 5-kinase activity"/>
    <property type="evidence" value="ECO:0000314"/>
    <property type="project" value="MGI"/>
</dbReference>
<dbReference type="GO" id="GO:0005524">
    <property type="term" value="F:ATP binding"/>
    <property type="evidence" value="ECO:0007669"/>
    <property type="project" value="UniProtKB-KW"/>
</dbReference>
<dbReference type="GO" id="GO:0030336">
    <property type="term" value="P:negative regulation of cell migration"/>
    <property type="evidence" value="ECO:0007669"/>
    <property type="project" value="Ensembl"/>
</dbReference>
<dbReference type="GO" id="GO:0010917">
    <property type="term" value="P:negative regulation of mitochondrial membrane potential"/>
    <property type="evidence" value="ECO:0000250"/>
    <property type="project" value="UniProtKB"/>
</dbReference>
<dbReference type="GO" id="GO:0051898">
    <property type="term" value="P:negative regulation of phosphatidylinositol 3-kinase/protein kinase B signal transduction"/>
    <property type="evidence" value="ECO:0007669"/>
    <property type="project" value="Ensembl"/>
</dbReference>
<dbReference type="GO" id="GO:0046488">
    <property type="term" value="P:phosphatidylinositol metabolic process"/>
    <property type="evidence" value="ECO:0007669"/>
    <property type="project" value="InterPro"/>
</dbReference>
<dbReference type="GO" id="GO:0043065">
    <property type="term" value="P:positive regulation of apoptotic process"/>
    <property type="evidence" value="ECO:0000250"/>
    <property type="project" value="UniProtKB"/>
</dbReference>
<dbReference type="CDD" id="cd17304">
    <property type="entry name" value="PIPKc_PIP5KL1"/>
    <property type="match status" value="1"/>
</dbReference>
<dbReference type="FunFam" id="3.30.800.10:FF:000011">
    <property type="entry name" value="Phosphatidylinositol 4-phosphate 5-kinase-like protein 1"/>
    <property type="match status" value="1"/>
</dbReference>
<dbReference type="FunFam" id="3.30.810.10:FF:000006">
    <property type="entry name" value="Phosphatidylinositol 4-phosphate 5-kinase-like protein 1"/>
    <property type="match status" value="1"/>
</dbReference>
<dbReference type="Gene3D" id="3.30.810.10">
    <property type="entry name" value="2-Layer Sandwich"/>
    <property type="match status" value="1"/>
</dbReference>
<dbReference type="Gene3D" id="3.30.800.10">
    <property type="entry name" value="Phosphatidylinositol Phosphate Kinase II Beta"/>
    <property type="match status" value="1"/>
</dbReference>
<dbReference type="InterPro" id="IPR027483">
    <property type="entry name" value="PInositol-4-P-4/5-kinase_C_sf"/>
</dbReference>
<dbReference type="InterPro" id="IPR002498">
    <property type="entry name" value="PInositol-4-P-4/5-kinase_core"/>
</dbReference>
<dbReference type="InterPro" id="IPR027484">
    <property type="entry name" value="PInositol-4-P-5-kinase_N"/>
</dbReference>
<dbReference type="InterPro" id="IPR023610">
    <property type="entry name" value="PInositol-4/5-P-5/4-kinase"/>
</dbReference>
<dbReference type="PANTHER" id="PTHR23086:SF46">
    <property type="entry name" value="PHOSPHATIDYLINOSITOL 4-PHOSPHATE 5-KINASE-LIKE PROTEIN 1"/>
    <property type="match status" value="1"/>
</dbReference>
<dbReference type="PANTHER" id="PTHR23086">
    <property type="entry name" value="PHOSPHATIDYLINOSITOL-4-PHOSPHATE 5-KINASE"/>
    <property type="match status" value="1"/>
</dbReference>
<dbReference type="Pfam" id="PF01504">
    <property type="entry name" value="PIP5K"/>
    <property type="match status" value="1"/>
</dbReference>
<dbReference type="SMART" id="SM00330">
    <property type="entry name" value="PIPKc"/>
    <property type="match status" value="1"/>
</dbReference>
<dbReference type="SUPFAM" id="SSF56104">
    <property type="entry name" value="SAICAR synthase-like"/>
    <property type="match status" value="1"/>
</dbReference>
<dbReference type="PROSITE" id="PS51455">
    <property type="entry name" value="PIPK"/>
    <property type="match status" value="1"/>
</dbReference>
<keyword id="KW-0025">Alternative splicing</keyword>
<keyword id="KW-0067">ATP-binding</keyword>
<keyword id="KW-0963">Cytoplasm</keyword>
<keyword id="KW-0418">Kinase</keyword>
<keyword id="KW-0443">Lipid metabolism</keyword>
<keyword id="KW-0472">Membrane</keyword>
<keyword id="KW-0547">Nucleotide-binding</keyword>
<keyword id="KW-1185">Reference proteome</keyword>
<keyword id="KW-0808">Transferase</keyword>
<reference key="1">
    <citation type="journal article" date="2004" name="J. Biol. Chem.">
        <title>Identification and characterization of a phosphoinositide phosphate kinase homolog.</title>
        <authorList>
            <person name="Chang J.D."/>
            <person name="Field S.J."/>
            <person name="Rameh L.E."/>
            <person name="Carpenter C.L."/>
            <person name="Cantley L.C."/>
        </authorList>
    </citation>
    <scope>NUCLEOTIDE SEQUENCE [MRNA] (ISOFORM 1)</scope>
    <scope>FUNCTION</scope>
    <scope>INTERACTION WITH PIP5K1A AND PIP5K1B</scope>
    <scope>SUBCELLULAR LOCATION</scope>
    <scope>TISSUE SPECIFICITY</scope>
    <scope>MUTAGENESIS OF LYS-155 AND ASP-281</scope>
    <source>
        <strain>C57BL/6J</strain>
        <tissue>Brain</tissue>
    </source>
</reference>
<reference key="2">
    <citation type="journal article" date="2005" name="Science">
        <title>The transcriptional landscape of the mammalian genome.</title>
        <authorList>
            <person name="Carninci P."/>
            <person name="Kasukawa T."/>
            <person name="Katayama S."/>
            <person name="Gough J."/>
            <person name="Frith M.C."/>
            <person name="Maeda N."/>
            <person name="Oyama R."/>
            <person name="Ravasi T."/>
            <person name="Lenhard B."/>
            <person name="Wells C."/>
            <person name="Kodzius R."/>
            <person name="Shimokawa K."/>
            <person name="Bajic V.B."/>
            <person name="Brenner S.E."/>
            <person name="Batalov S."/>
            <person name="Forrest A.R."/>
            <person name="Zavolan M."/>
            <person name="Davis M.J."/>
            <person name="Wilming L.G."/>
            <person name="Aidinis V."/>
            <person name="Allen J.E."/>
            <person name="Ambesi-Impiombato A."/>
            <person name="Apweiler R."/>
            <person name="Aturaliya R.N."/>
            <person name="Bailey T.L."/>
            <person name="Bansal M."/>
            <person name="Baxter L."/>
            <person name="Beisel K.W."/>
            <person name="Bersano T."/>
            <person name="Bono H."/>
            <person name="Chalk A.M."/>
            <person name="Chiu K.P."/>
            <person name="Choudhary V."/>
            <person name="Christoffels A."/>
            <person name="Clutterbuck D.R."/>
            <person name="Crowe M.L."/>
            <person name="Dalla E."/>
            <person name="Dalrymple B.P."/>
            <person name="de Bono B."/>
            <person name="Della Gatta G."/>
            <person name="di Bernardo D."/>
            <person name="Down T."/>
            <person name="Engstrom P."/>
            <person name="Fagiolini M."/>
            <person name="Faulkner G."/>
            <person name="Fletcher C.F."/>
            <person name="Fukushima T."/>
            <person name="Furuno M."/>
            <person name="Futaki S."/>
            <person name="Gariboldi M."/>
            <person name="Georgii-Hemming P."/>
            <person name="Gingeras T.R."/>
            <person name="Gojobori T."/>
            <person name="Green R.E."/>
            <person name="Gustincich S."/>
            <person name="Harbers M."/>
            <person name="Hayashi Y."/>
            <person name="Hensch T.K."/>
            <person name="Hirokawa N."/>
            <person name="Hill D."/>
            <person name="Huminiecki L."/>
            <person name="Iacono M."/>
            <person name="Ikeo K."/>
            <person name="Iwama A."/>
            <person name="Ishikawa T."/>
            <person name="Jakt M."/>
            <person name="Kanapin A."/>
            <person name="Katoh M."/>
            <person name="Kawasawa Y."/>
            <person name="Kelso J."/>
            <person name="Kitamura H."/>
            <person name="Kitano H."/>
            <person name="Kollias G."/>
            <person name="Krishnan S.P."/>
            <person name="Kruger A."/>
            <person name="Kummerfeld S.K."/>
            <person name="Kurochkin I.V."/>
            <person name="Lareau L.F."/>
            <person name="Lazarevic D."/>
            <person name="Lipovich L."/>
            <person name="Liu J."/>
            <person name="Liuni S."/>
            <person name="McWilliam S."/>
            <person name="Madan Babu M."/>
            <person name="Madera M."/>
            <person name="Marchionni L."/>
            <person name="Matsuda H."/>
            <person name="Matsuzawa S."/>
            <person name="Miki H."/>
            <person name="Mignone F."/>
            <person name="Miyake S."/>
            <person name="Morris K."/>
            <person name="Mottagui-Tabar S."/>
            <person name="Mulder N."/>
            <person name="Nakano N."/>
            <person name="Nakauchi H."/>
            <person name="Ng P."/>
            <person name="Nilsson R."/>
            <person name="Nishiguchi S."/>
            <person name="Nishikawa S."/>
            <person name="Nori F."/>
            <person name="Ohara O."/>
            <person name="Okazaki Y."/>
            <person name="Orlando V."/>
            <person name="Pang K.C."/>
            <person name="Pavan W.J."/>
            <person name="Pavesi G."/>
            <person name="Pesole G."/>
            <person name="Petrovsky N."/>
            <person name="Piazza S."/>
            <person name="Reed J."/>
            <person name="Reid J.F."/>
            <person name="Ring B.Z."/>
            <person name="Ringwald M."/>
            <person name="Rost B."/>
            <person name="Ruan Y."/>
            <person name="Salzberg S.L."/>
            <person name="Sandelin A."/>
            <person name="Schneider C."/>
            <person name="Schoenbach C."/>
            <person name="Sekiguchi K."/>
            <person name="Semple C.A."/>
            <person name="Seno S."/>
            <person name="Sessa L."/>
            <person name="Sheng Y."/>
            <person name="Shibata Y."/>
            <person name="Shimada H."/>
            <person name="Shimada K."/>
            <person name="Silva D."/>
            <person name="Sinclair B."/>
            <person name="Sperling S."/>
            <person name="Stupka E."/>
            <person name="Sugiura K."/>
            <person name="Sultana R."/>
            <person name="Takenaka Y."/>
            <person name="Taki K."/>
            <person name="Tammoja K."/>
            <person name="Tan S.L."/>
            <person name="Tang S."/>
            <person name="Taylor M.S."/>
            <person name="Tegner J."/>
            <person name="Teichmann S.A."/>
            <person name="Ueda H.R."/>
            <person name="van Nimwegen E."/>
            <person name="Verardo R."/>
            <person name="Wei C.L."/>
            <person name="Yagi K."/>
            <person name="Yamanishi H."/>
            <person name="Zabarovsky E."/>
            <person name="Zhu S."/>
            <person name="Zimmer A."/>
            <person name="Hide W."/>
            <person name="Bult C."/>
            <person name="Grimmond S.M."/>
            <person name="Teasdale R.D."/>
            <person name="Liu E.T."/>
            <person name="Brusic V."/>
            <person name="Quackenbush J."/>
            <person name="Wahlestedt C."/>
            <person name="Mattick J.S."/>
            <person name="Hume D.A."/>
            <person name="Kai C."/>
            <person name="Sasaki D."/>
            <person name="Tomaru Y."/>
            <person name="Fukuda S."/>
            <person name="Kanamori-Katayama M."/>
            <person name="Suzuki M."/>
            <person name="Aoki J."/>
            <person name="Arakawa T."/>
            <person name="Iida J."/>
            <person name="Imamura K."/>
            <person name="Itoh M."/>
            <person name="Kato T."/>
            <person name="Kawaji H."/>
            <person name="Kawagashira N."/>
            <person name="Kawashima T."/>
            <person name="Kojima M."/>
            <person name="Kondo S."/>
            <person name="Konno H."/>
            <person name="Nakano K."/>
            <person name="Ninomiya N."/>
            <person name="Nishio T."/>
            <person name="Okada M."/>
            <person name="Plessy C."/>
            <person name="Shibata K."/>
            <person name="Shiraki T."/>
            <person name="Suzuki S."/>
            <person name="Tagami M."/>
            <person name="Waki K."/>
            <person name="Watahiki A."/>
            <person name="Okamura-Oho Y."/>
            <person name="Suzuki H."/>
            <person name="Kawai J."/>
            <person name="Hayashizaki Y."/>
        </authorList>
    </citation>
    <scope>NUCLEOTIDE SEQUENCE [LARGE SCALE MRNA] (ISOFORMS 2 AND 3)</scope>
    <source>
        <strain>C57BL/6J</strain>
        <tissue>Eye</tissue>
        <tissue>Testis</tissue>
    </source>
</reference>
<reference key="3">
    <citation type="journal article" date="2009" name="PLoS Biol.">
        <title>Lineage-specific biology revealed by a finished genome assembly of the mouse.</title>
        <authorList>
            <person name="Church D.M."/>
            <person name="Goodstadt L."/>
            <person name="Hillier L.W."/>
            <person name="Zody M.C."/>
            <person name="Goldstein S."/>
            <person name="She X."/>
            <person name="Bult C.J."/>
            <person name="Agarwala R."/>
            <person name="Cherry J.L."/>
            <person name="DiCuccio M."/>
            <person name="Hlavina W."/>
            <person name="Kapustin Y."/>
            <person name="Meric P."/>
            <person name="Maglott D."/>
            <person name="Birtle Z."/>
            <person name="Marques A.C."/>
            <person name="Graves T."/>
            <person name="Zhou S."/>
            <person name="Teague B."/>
            <person name="Potamousis K."/>
            <person name="Churas C."/>
            <person name="Place M."/>
            <person name="Herschleb J."/>
            <person name="Runnheim R."/>
            <person name="Forrest D."/>
            <person name="Amos-Landgraf J."/>
            <person name="Schwartz D.C."/>
            <person name="Cheng Z."/>
            <person name="Lindblad-Toh K."/>
            <person name="Eichler E.E."/>
            <person name="Ponting C.P."/>
        </authorList>
    </citation>
    <scope>NUCLEOTIDE SEQUENCE [LARGE SCALE GENOMIC DNA]</scope>
    <source>
        <strain>C57BL/6J</strain>
    </source>
</reference>
<reference key="4">
    <citation type="journal article" date="2004" name="Genome Res.">
        <title>The status, quality, and expansion of the NIH full-length cDNA project: the Mammalian Gene Collection (MGC).</title>
        <authorList>
            <consortium name="The MGC Project Team"/>
        </authorList>
    </citation>
    <scope>NUCLEOTIDE SEQUENCE [LARGE SCALE MRNA] (ISOFORMS 1 AND 4)</scope>
    <source>
        <strain>C57BL/6J</strain>
        <tissue>Brain</tissue>
        <tissue>Mammary gland</tissue>
    </source>
</reference>
<sequence length="395" mass="45293">MATPSLRSHEIPAHSQEAGNKSISSGSRRGLLWHLRARQSRVGLFEVGPGHELHRMTRMMQEGLWAATQVSKNNPPTGPTTQKDYLEVMTQVHEEGFELGTLAGPAFARLRKSIGLTEEDYQATLGPGDPYLQFFSTSKSKASFFLTHDQRFFVKTQRRHEVHVLLAHLPRYVEHLQQYPHSLLARLLGVYSLRVAQGKKKYFIIMQCIFYPTSRISERYDIKGCNISRWVDPAPEGSPLVLVLKDLNFQEKTMRLGAQRSWFLRQMELDTAFLREVNVLDYSLLVAIQFLHEDEKGIHHSVFSTFKSIQGVSKSKGTGDQNCRMLPDLPNALHILDGPDQRYFLGLVDMTTVYGFRKRLEHVWKMVRYPGQSVSTVSPAHYARRLCRWAEVHTE</sequence>
<protein>
    <recommendedName>
        <fullName>Phosphatidylinositol 4-phosphate 5-kinase-like protein 1</fullName>
        <shortName>PI(4)P 5-kinase-like protein 1</shortName>
        <shortName>PtdIns(4)P-5-kinase-like protein 1</shortName>
    </recommendedName>
    <alternativeName>
        <fullName evidence="4">Phosphatidylinositol phosphate kinase homolog</fullName>
        <shortName evidence="4">PIPKH</shortName>
    </alternativeName>
</protein>
<name>PI5L1_MOUSE</name>
<organism>
    <name type="scientific">Mus musculus</name>
    <name type="common">Mouse</name>
    <dbReference type="NCBI Taxonomy" id="10090"/>
    <lineage>
        <taxon>Eukaryota</taxon>
        <taxon>Metazoa</taxon>
        <taxon>Chordata</taxon>
        <taxon>Craniata</taxon>
        <taxon>Vertebrata</taxon>
        <taxon>Euteleostomi</taxon>
        <taxon>Mammalia</taxon>
        <taxon>Eutheria</taxon>
        <taxon>Euarchontoglires</taxon>
        <taxon>Glires</taxon>
        <taxon>Rodentia</taxon>
        <taxon>Myomorpha</taxon>
        <taxon>Muroidea</taxon>
        <taxon>Muridae</taxon>
        <taxon>Murinae</taxon>
        <taxon>Mus</taxon>
        <taxon>Mus</taxon>
    </lineage>
</organism>
<proteinExistence type="evidence at protein level"/>
<accession>Q6U7H8</accession>
<accession>A2ASY7</accession>
<accession>A2ASY9</accession>
<accession>Q3TNU0</accession>
<accession>Q3V0C8</accession>
<accession>Q52KH3</accession>
<accession>Q8K345</accession>
<evidence type="ECO:0000255" key="1">
    <source>
        <dbReference type="PROSITE-ProRule" id="PRU00781"/>
    </source>
</evidence>
<evidence type="ECO:0000256" key="2">
    <source>
        <dbReference type="SAM" id="MobiDB-lite"/>
    </source>
</evidence>
<evidence type="ECO:0000269" key="3">
    <source>
    </source>
</evidence>
<evidence type="ECO:0000303" key="4">
    <source>
    </source>
</evidence>
<evidence type="ECO:0000303" key="5">
    <source>
    </source>
</evidence>
<evidence type="ECO:0000303" key="6">
    <source>
    </source>
</evidence>
<evidence type="ECO:0000305" key="7"/>
<gene>
    <name type="primary">Pip5kl1</name>
    <name type="synonym">Pipkh</name>
</gene>
<comment type="function">
    <text evidence="3">May act as a scaffold to localize and regulate type I phosphatidylinositol 4-phosphate 5-kinases to specific compartments within the cell, where they generate PI(4,5)P2 for actin nucleation, signaling and scaffold protein recruitment and conversion to PI(3,4,5)P3.</text>
</comment>
<comment type="subunit">
    <text evidence="3">Interacts with type I phosphatidylinositol 4-phosphate 5-kinases, including PIP5K1A and PIP5K1B.</text>
</comment>
<comment type="subcellular location">
    <subcellularLocation>
        <location evidence="3">Cytoplasm</location>
    </subcellularLocation>
    <subcellularLocation>
        <location evidence="3">Membrane</location>
    </subcellularLocation>
    <text>Localized to large cytoplasmic vesicular structures.</text>
</comment>
<comment type="alternative products">
    <event type="alternative splicing"/>
    <isoform>
        <id>Q6U7H8-1</id>
        <name>1</name>
        <sequence type="displayed"/>
    </isoform>
    <isoform>
        <id>Q6U7H8-2</id>
        <name>2</name>
        <sequence type="described" ref="VSP_024905"/>
    </isoform>
    <isoform>
        <id>Q6U7H8-3</id>
        <name>3</name>
        <sequence type="described" ref="VSP_024906 VSP_024909"/>
    </isoform>
    <isoform>
        <id>Q6U7H8-4</id>
        <name>4</name>
        <sequence type="described" ref="VSP_024907 VSP_024908"/>
    </isoform>
</comment>
<comment type="tissue specificity">
    <text evidence="3">Highly expressed in brain and testis, relatively to heart, spleen, lung, liver, skeletal muscle and kidney.</text>
</comment>
<comment type="caution">
    <text evidence="3">In spite of its similarity to other phosphatidylinositol kinases, lacks intrinsic lipid kinase activity.</text>
</comment>
<feature type="chain" id="PRO_0000285759" description="Phosphatidylinositol 4-phosphate 5-kinase-like protein 1">
    <location>
        <begin position="1"/>
        <end position="395"/>
    </location>
</feature>
<feature type="domain" description="PIPK" evidence="1">
    <location>
        <begin position="37"/>
        <end position="394"/>
    </location>
</feature>
<feature type="region of interest" description="Disordered" evidence="2">
    <location>
        <begin position="1"/>
        <end position="25"/>
    </location>
</feature>
<feature type="splice variant" id="VSP_024905" description="In isoform 2." evidence="6">
    <original>MATPSLRSHE</original>
    <variation>MLFVSCASSHQ</variation>
    <location>
        <begin position="1"/>
        <end position="10"/>
    </location>
</feature>
<feature type="splice variant" id="VSP_024906" description="In isoform 3." evidence="6">
    <original>E</original>
    <variation>EVGADQRGDKKGKGESLAITLARGLNTPPPRLCSGKIKTRPTE</variation>
    <location>
        <position position="10"/>
    </location>
</feature>
<feature type="splice variant" id="VSP_024907" description="In isoform 4." evidence="5">
    <original>KYFIIMQCIFYPTSRI</original>
    <variation>VSVADRGGSAVGAAGG</variation>
    <location>
        <begin position="201"/>
        <end position="216"/>
    </location>
</feature>
<feature type="splice variant" id="VSP_024908" description="In isoform 4." evidence="5">
    <location>
        <begin position="217"/>
        <end position="395"/>
    </location>
</feature>
<feature type="splice variant" id="VSP_024909" description="In isoform 3." evidence="6">
    <original>SIQGVSKSKGTGDQNCRMLPDLPNALHILDGPDQRYFLGLVDMTTVYGFRKRLEHVWKMVRYPGQSVSTVSPAHYARRLCRWAEVHTE</original>
    <variation>RTVTPAMLAMALTETTH</variation>
    <location>
        <begin position="308"/>
        <end position="395"/>
    </location>
</feature>
<feature type="mutagenesis site" description="No effect on lipid kinase activity when the protein is purified from mammalian cell extracts. No effect on lipid kinase activity when the protein is purified from mammalian cell extracts; when associated with A-281." evidence="3">
    <original>K</original>
    <variation>R</variation>
    <location>
        <position position="155"/>
    </location>
</feature>
<feature type="mutagenesis site" description="No effect on lipid kinase activity observed when the protein is purified from mammalian cell extracts; when associated with R-155." evidence="3">
    <original>D</original>
    <variation>A</variation>
    <location>
        <position position="281"/>
    </location>
</feature>
<feature type="sequence conflict" description="In Ref. 4; AAH28795." evidence="7" ref="4">
    <original>RISE</original>
    <variation>VLPP</variation>
    <location>
        <begin position="215"/>
        <end position="218"/>
    </location>
</feature>
<feature type="sequence conflict" description="In Ref. 4; AAH28795." evidence="7" ref="4">
    <original>R</original>
    <variation>Q</variation>
    <location>
        <position position="265"/>
    </location>
</feature>